<feature type="chain" id="PRO_1000093474" description="Peptide chain release factor 1">
    <location>
        <begin position="1"/>
        <end position="358"/>
    </location>
</feature>
<feature type="modified residue" description="N5-methylglutamine" evidence="1">
    <location>
        <position position="233"/>
    </location>
</feature>
<accession>B1I069</accession>
<evidence type="ECO:0000255" key="1">
    <source>
        <dbReference type="HAMAP-Rule" id="MF_00093"/>
    </source>
</evidence>
<protein>
    <recommendedName>
        <fullName evidence="1">Peptide chain release factor 1</fullName>
        <shortName evidence="1">RF-1</shortName>
    </recommendedName>
</protein>
<organism>
    <name type="scientific">Lysinibacillus sphaericus (strain C3-41)</name>
    <dbReference type="NCBI Taxonomy" id="444177"/>
    <lineage>
        <taxon>Bacteria</taxon>
        <taxon>Bacillati</taxon>
        <taxon>Bacillota</taxon>
        <taxon>Bacilli</taxon>
        <taxon>Bacillales</taxon>
        <taxon>Bacillaceae</taxon>
        <taxon>Lysinibacillus</taxon>
    </lineage>
</organism>
<dbReference type="EMBL" id="CP000817">
    <property type="protein sequence ID" value="ACA38607.1"/>
    <property type="molecule type" value="Genomic_DNA"/>
</dbReference>
<dbReference type="RefSeq" id="WP_012292750.1">
    <property type="nucleotide sequence ID" value="NC_010382.1"/>
</dbReference>
<dbReference type="SMR" id="B1I069"/>
<dbReference type="EnsemblBacteria" id="ACA38607">
    <property type="protein sequence ID" value="ACA38607"/>
    <property type="gene ID" value="Bsph_0995"/>
</dbReference>
<dbReference type="KEGG" id="lsp:Bsph_0995"/>
<dbReference type="HOGENOM" id="CLU_036856_0_1_9"/>
<dbReference type="Proteomes" id="UP000002164">
    <property type="component" value="Chromosome"/>
</dbReference>
<dbReference type="GO" id="GO:0005737">
    <property type="term" value="C:cytoplasm"/>
    <property type="evidence" value="ECO:0007669"/>
    <property type="project" value="UniProtKB-SubCell"/>
</dbReference>
<dbReference type="GO" id="GO:0016149">
    <property type="term" value="F:translation release factor activity, codon specific"/>
    <property type="evidence" value="ECO:0007669"/>
    <property type="project" value="UniProtKB-UniRule"/>
</dbReference>
<dbReference type="FunFam" id="3.30.160.20:FF:000004">
    <property type="entry name" value="Peptide chain release factor 1"/>
    <property type="match status" value="1"/>
</dbReference>
<dbReference type="FunFam" id="3.30.70.1660:FF:000002">
    <property type="entry name" value="Peptide chain release factor 1"/>
    <property type="match status" value="1"/>
</dbReference>
<dbReference type="FunFam" id="3.30.70.1660:FF:000004">
    <property type="entry name" value="Peptide chain release factor 1"/>
    <property type="match status" value="1"/>
</dbReference>
<dbReference type="Gene3D" id="3.30.160.20">
    <property type="match status" value="1"/>
</dbReference>
<dbReference type="Gene3D" id="3.30.70.1660">
    <property type="match status" value="2"/>
</dbReference>
<dbReference type="Gene3D" id="6.10.140.1950">
    <property type="match status" value="1"/>
</dbReference>
<dbReference type="HAMAP" id="MF_00093">
    <property type="entry name" value="Rel_fac_1"/>
    <property type="match status" value="1"/>
</dbReference>
<dbReference type="InterPro" id="IPR005139">
    <property type="entry name" value="PCRF"/>
</dbReference>
<dbReference type="InterPro" id="IPR000352">
    <property type="entry name" value="Pep_chain_release_fac_I"/>
</dbReference>
<dbReference type="InterPro" id="IPR045853">
    <property type="entry name" value="Pep_chain_release_fac_I_sf"/>
</dbReference>
<dbReference type="InterPro" id="IPR050057">
    <property type="entry name" value="Prokaryotic/Mito_RF"/>
</dbReference>
<dbReference type="InterPro" id="IPR004373">
    <property type="entry name" value="RF-1"/>
</dbReference>
<dbReference type="NCBIfam" id="TIGR00019">
    <property type="entry name" value="prfA"/>
    <property type="match status" value="1"/>
</dbReference>
<dbReference type="NCBIfam" id="NF001859">
    <property type="entry name" value="PRK00591.1"/>
    <property type="match status" value="1"/>
</dbReference>
<dbReference type="PANTHER" id="PTHR43804">
    <property type="entry name" value="LD18447P"/>
    <property type="match status" value="1"/>
</dbReference>
<dbReference type="PANTHER" id="PTHR43804:SF7">
    <property type="entry name" value="LD18447P"/>
    <property type="match status" value="1"/>
</dbReference>
<dbReference type="Pfam" id="PF03462">
    <property type="entry name" value="PCRF"/>
    <property type="match status" value="1"/>
</dbReference>
<dbReference type="Pfam" id="PF00472">
    <property type="entry name" value="RF-1"/>
    <property type="match status" value="1"/>
</dbReference>
<dbReference type="SMART" id="SM00937">
    <property type="entry name" value="PCRF"/>
    <property type="match status" value="1"/>
</dbReference>
<dbReference type="SUPFAM" id="SSF75620">
    <property type="entry name" value="Release factor"/>
    <property type="match status" value="1"/>
</dbReference>
<dbReference type="PROSITE" id="PS00745">
    <property type="entry name" value="RF_PROK_I"/>
    <property type="match status" value="1"/>
</dbReference>
<comment type="function">
    <text evidence="1">Peptide chain release factor 1 directs the termination of translation in response to the peptide chain termination codons UAG and UAA.</text>
</comment>
<comment type="subcellular location">
    <subcellularLocation>
        <location evidence="1">Cytoplasm</location>
    </subcellularLocation>
</comment>
<comment type="PTM">
    <text evidence="1">Methylated by PrmC. Methylation increases the termination efficiency of RF1.</text>
</comment>
<comment type="similarity">
    <text evidence="1">Belongs to the prokaryotic/mitochondrial release factor family.</text>
</comment>
<proteinExistence type="inferred from homology"/>
<sequence length="358" mass="41073">MFDRLQAVEDRYERLTELLSDPDIVNDSKKLREYSKEQSDIQETVDTYREYKNVKEQLVDTREMLDSEKDPDMHEMVKEEFNLLKAQQEELEERLRILLIPKDPNDNKNVIMEIRGAAGGDEANIFAGDLFRMYSRYAETQGWKIDIMEATPNPMGGYKEVIFMINGQGAYSKFKFENGAHRVQRVPATESQGRIHTSTATVACLPEVEEVDVEIHEKDIRVDTFASSGAGGQSVNTTMSAVRMTHLPTGVVVSMQDERSQIKNREKAMKILRARVADMYMQEAQKEIDATRKSAVGSGDRSERIRTYNYPQNRVTDHRIGLTIQKLDQIVEGRLDEIIDTLILEEQASKLERLNDDL</sequence>
<name>RF1_LYSSC</name>
<gene>
    <name evidence="1" type="primary">prfA</name>
    <name type="ordered locus">Bsph_0995</name>
</gene>
<keyword id="KW-0963">Cytoplasm</keyword>
<keyword id="KW-0488">Methylation</keyword>
<keyword id="KW-0648">Protein biosynthesis</keyword>
<reference key="1">
    <citation type="journal article" date="2008" name="J. Bacteriol.">
        <title>Complete genome sequence of the mosquitocidal bacterium Bacillus sphaericus C3-41 and comparison with those of closely related Bacillus species.</title>
        <authorList>
            <person name="Hu X."/>
            <person name="Fan W."/>
            <person name="Han B."/>
            <person name="Liu H."/>
            <person name="Zheng D."/>
            <person name="Li Q."/>
            <person name="Dong W."/>
            <person name="Yan J."/>
            <person name="Gao M."/>
            <person name="Berry C."/>
            <person name="Yuan Z."/>
        </authorList>
    </citation>
    <scope>NUCLEOTIDE SEQUENCE [LARGE SCALE GENOMIC DNA]</scope>
    <source>
        <strain>C3-41</strain>
    </source>
</reference>